<reference key="1">
    <citation type="journal article" date="2006" name="J. Bacteriol.">
        <title>The genome sequence of the obligately chemolithoautotrophic, facultatively anaerobic bacterium Thiobacillus denitrificans.</title>
        <authorList>
            <person name="Beller H.R."/>
            <person name="Chain P.S."/>
            <person name="Letain T.E."/>
            <person name="Chakicherla A."/>
            <person name="Larimer F.W."/>
            <person name="Richardson P.M."/>
            <person name="Coleman M.A."/>
            <person name="Wood A.P."/>
            <person name="Kelly D.P."/>
        </authorList>
    </citation>
    <scope>NUCLEOTIDE SEQUENCE [LARGE SCALE GENOMIC DNA]</scope>
    <source>
        <strain>ATCC 25259 / T1</strain>
    </source>
</reference>
<comment type="function">
    <text evidence="1">Catalyzes the conversion of 3-deoxy-D-arabino-heptulosonate 7-phosphate (DAHP) to dehydroquinate (DHQ).</text>
</comment>
<comment type="catalytic activity">
    <reaction evidence="1">
        <text>7-phospho-2-dehydro-3-deoxy-D-arabino-heptonate = 3-dehydroquinate + phosphate</text>
        <dbReference type="Rhea" id="RHEA:21968"/>
        <dbReference type="ChEBI" id="CHEBI:32364"/>
        <dbReference type="ChEBI" id="CHEBI:43474"/>
        <dbReference type="ChEBI" id="CHEBI:58394"/>
        <dbReference type="EC" id="4.2.3.4"/>
    </reaction>
</comment>
<comment type="cofactor">
    <cofactor evidence="1">
        <name>Co(2+)</name>
        <dbReference type="ChEBI" id="CHEBI:48828"/>
    </cofactor>
    <cofactor evidence="1">
        <name>Zn(2+)</name>
        <dbReference type="ChEBI" id="CHEBI:29105"/>
    </cofactor>
    <text evidence="1">Binds 1 divalent metal cation per subunit. Can use either Co(2+) or Zn(2+).</text>
</comment>
<comment type="cofactor">
    <cofactor evidence="1">
        <name>NAD(+)</name>
        <dbReference type="ChEBI" id="CHEBI:57540"/>
    </cofactor>
</comment>
<comment type="pathway">
    <text evidence="1">Metabolic intermediate biosynthesis; chorismate biosynthesis; chorismate from D-erythrose 4-phosphate and phosphoenolpyruvate: step 2/7.</text>
</comment>
<comment type="subcellular location">
    <subcellularLocation>
        <location evidence="1">Cytoplasm</location>
    </subcellularLocation>
</comment>
<comment type="similarity">
    <text evidence="1">Belongs to the sugar phosphate cyclases superfamily. Dehydroquinate synthase family.</text>
</comment>
<keyword id="KW-0028">Amino-acid biosynthesis</keyword>
<keyword id="KW-0057">Aromatic amino acid biosynthesis</keyword>
<keyword id="KW-0170">Cobalt</keyword>
<keyword id="KW-0963">Cytoplasm</keyword>
<keyword id="KW-0456">Lyase</keyword>
<keyword id="KW-0479">Metal-binding</keyword>
<keyword id="KW-0520">NAD</keyword>
<keyword id="KW-0547">Nucleotide-binding</keyword>
<keyword id="KW-1185">Reference proteome</keyword>
<keyword id="KW-0862">Zinc</keyword>
<dbReference type="EC" id="4.2.3.4" evidence="1"/>
<dbReference type="EMBL" id="CP000116">
    <property type="protein sequence ID" value="AAZ96268.1"/>
    <property type="molecule type" value="Genomic_DNA"/>
</dbReference>
<dbReference type="RefSeq" id="WP_011310828.1">
    <property type="nucleotide sequence ID" value="NC_007404.1"/>
</dbReference>
<dbReference type="SMR" id="Q3SLY4"/>
<dbReference type="STRING" id="292415.Tbd_0315"/>
<dbReference type="KEGG" id="tbd:Tbd_0315"/>
<dbReference type="eggNOG" id="COG0337">
    <property type="taxonomic scope" value="Bacteria"/>
</dbReference>
<dbReference type="HOGENOM" id="CLU_001201_0_2_4"/>
<dbReference type="OrthoDB" id="9806583at2"/>
<dbReference type="UniPathway" id="UPA00053">
    <property type="reaction ID" value="UER00085"/>
</dbReference>
<dbReference type="Proteomes" id="UP000008291">
    <property type="component" value="Chromosome"/>
</dbReference>
<dbReference type="GO" id="GO:0005737">
    <property type="term" value="C:cytoplasm"/>
    <property type="evidence" value="ECO:0007669"/>
    <property type="project" value="UniProtKB-SubCell"/>
</dbReference>
<dbReference type="GO" id="GO:0003856">
    <property type="term" value="F:3-dehydroquinate synthase activity"/>
    <property type="evidence" value="ECO:0007669"/>
    <property type="project" value="UniProtKB-UniRule"/>
</dbReference>
<dbReference type="GO" id="GO:0046872">
    <property type="term" value="F:metal ion binding"/>
    <property type="evidence" value="ECO:0007669"/>
    <property type="project" value="UniProtKB-KW"/>
</dbReference>
<dbReference type="GO" id="GO:0000166">
    <property type="term" value="F:nucleotide binding"/>
    <property type="evidence" value="ECO:0007669"/>
    <property type="project" value="UniProtKB-KW"/>
</dbReference>
<dbReference type="GO" id="GO:0008652">
    <property type="term" value="P:amino acid biosynthetic process"/>
    <property type="evidence" value="ECO:0007669"/>
    <property type="project" value="UniProtKB-KW"/>
</dbReference>
<dbReference type="GO" id="GO:0009073">
    <property type="term" value="P:aromatic amino acid family biosynthetic process"/>
    <property type="evidence" value="ECO:0007669"/>
    <property type="project" value="UniProtKB-KW"/>
</dbReference>
<dbReference type="GO" id="GO:0009423">
    <property type="term" value="P:chorismate biosynthetic process"/>
    <property type="evidence" value="ECO:0007669"/>
    <property type="project" value="UniProtKB-UniRule"/>
</dbReference>
<dbReference type="CDD" id="cd08195">
    <property type="entry name" value="DHQS"/>
    <property type="match status" value="1"/>
</dbReference>
<dbReference type="FunFam" id="1.20.1090.10:FF:000002">
    <property type="entry name" value="3-dehydroquinate synthase"/>
    <property type="match status" value="1"/>
</dbReference>
<dbReference type="FunFam" id="3.40.50.1970:FF:000001">
    <property type="entry name" value="3-dehydroquinate synthase"/>
    <property type="match status" value="1"/>
</dbReference>
<dbReference type="Gene3D" id="3.40.50.1970">
    <property type="match status" value="1"/>
</dbReference>
<dbReference type="Gene3D" id="1.20.1090.10">
    <property type="entry name" value="Dehydroquinate synthase-like - alpha domain"/>
    <property type="match status" value="1"/>
</dbReference>
<dbReference type="HAMAP" id="MF_00110">
    <property type="entry name" value="DHQ_synthase"/>
    <property type="match status" value="1"/>
</dbReference>
<dbReference type="InterPro" id="IPR050071">
    <property type="entry name" value="Dehydroquinate_synthase"/>
</dbReference>
<dbReference type="InterPro" id="IPR016037">
    <property type="entry name" value="DHQ_synth_AroB"/>
</dbReference>
<dbReference type="InterPro" id="IPR030963">
    <property type="entry name" value="DHQ_synth_fam"/>
</dbReference>
<dbReference type="InterPro" id="IPR030960">
    <property type="entry name" value="DHQS/DOIS_N"/>
</dbReference>
<dbReference type="InterPro" id="IPR056179">
    <property type="entry name" value="DHQS_C"/>
</dbReference>
<dbReference type="NCBIfam" id="TIGR01357">
    <property type="entry name" value="aroB"/>
    <property type="match status" value="1"/>
</dbReference>
<dbReference type="PANTHER" id="PTHR43622">
    <property type="entry name" value="3-DEHYDROQUINATE SYNTHASE"/>
    <property type="match status" value="1"/>
</dbReference>
<dbReference type="PANTHER" id="PTHR43622:SF7">
    <property type="entry name" value="3-DEHYDROQUINATE SYNTHASE, CHLOROPLASTIC"/>
    <property type="match status" value="1"/>
</dbReference>
<dbReference type="Pfam" id="PF01761">
    <property type="entry name" value="DHQ_synthase"/>
    <property type="match status" value="1"/>
</dbReference>
<dbReference type="Pfam" id="PF24621">
    <property type="entry name" value="DHQS_C"/>
    <property type="match status" value="1"/>
</dbReference>
<dbReference type="PIRSF" id="PIRSF001455">
    <property type="entry name" value="DHQ_synth"/>
    <property type="match status" value="1"/>
</dbReference>
<dbReference type="SUPFAM" id="SSF56796">
    <property type="entry name" value="Dehydroquinate synthase-like"/>
    <property type="match status" value="1"/>
</dbReference>
<proteinExistence type="inferred from homology"/>
<protein>
    <recommendedName>
        <fullName evidence="1">3-dehydroquinate synthase</fullName>
        <shortName evidence="1">DHQS</shortName>
        <ecNumber evidence="1">4.2.3.4</ecNumber>
    </recommendedName>
</protein>
<gene>
    <name evidence="1" type="primary">aroB</name>
    <name type="ordered locus">Tbd_0315</name>
</gene>
<sequence length="359" mass="38360">MQTLTVDLGDRSYPIHIGAALLTRADLVLPHLAQKRVMVVTNTTVGPLYLAQLKAALEAAGVRVAEVVLPDGEAYKNWETLNLVFDALLRERAERKTTLIALGGGVIGDMTGFAAACYQRGVPFIQIPTTLLSQVDSSVGGKTGINHPLGKNMIGAFYQPKLVLADAATLGTLPARELSAGLAEVIKYGLIWDVEFLAWLEANMDRLRALDAEAISHAIYRSCEIKAQVVAEDEREGGLRAILNLGHTFGHAIETGMGYGAWLHGEAVAAGMVLAAETSQRLGWLGEADVARTRALIRAAGLPDVAPNLGVDAYLEYMGHDKKVEGGKMRFVLLKKLGEAVITDAVPADVLTAVLTPPH</sequence>
<evidence type="ECO:0000255" key="1">
    <source>
        <dbReference type="HAMAP-Rule" id="MF_00110"/>
    </source>
</evidence>
<feature type="chain" id="PRO_0000231139" description="3-dehydroquinate synthase">
    <location>
        <begin position="1"/>
        <end position="359"/>
    </location>
</feature>
<feature type="binding site" evidence="1">
    <location>
        <begin position="71"/>
        <end position="76"/>
    </location>
    <ligand>
        <name>NAD(+)</name>
        <dbReference type="ChEBI" id="CHEBI:57540"/>
    </ligand>
</feature>
<feature type="binding site" evidence="1">
    <location>
        <begin position="105"/>
        <end position="109"/>
    </location>
    <ligand>
        <name>NAD(+)</name>
        <dbReference type="ChEBI" id="CHEBI:57540"/>
    </ligand>
</feature>
<feature type="binding site" evidence="1">
    <location>
        <begin position="129"/>
        <end position="130"/>
    </location>
    <ligand>
        <name>NAD(+)</name>
        <dbReference type="ChEBI" id="CHEBI:57540"/>
    </ligand>
</feature>
<feature type="binding site" evidence="1">
    <location>
        <position position="142"/>
    </location>
    <ligand>
        <name>NAD(+)</name>
        <dbReference type="ChEBI" id="CHEBI:57540"/>
    </ligand>
</feature>
<feature type="binding site" evidence="1">
    <location>
        <position position="151"/>
    </location>
    <ligand>
        <name>NAD(+)</name>
        <dbReference type="ChEBI" id="CHEBI:57540"/>
    </ligand>
</feature>
<feature type="binding site" evidence="1">
    <location>
        <begin position="169"/>
        <end position="172"/>
    </location>
    <ligand>
        <name>NAD(+)</name>
        <dbReference type="ChEBI" id="CHEBI:57540"/>
    </ligand>
</feature>
<feature type="binding site" evidence="1">
    <location>
        <position position="184"/>
    </location>
    <ligand>
        <name>Zn(2+)</name>
        <dbReference type="ChEBI" id="CHEBI:29105"/>
    </ligand>
</feature>
<feature type="binding site" evidence="1">
    <location>
        <position position="247"/>
    </location>
    <ligand>
        <name>Zn(2+)</name>
        <dbReference type="ChEBI" id="CHEBI:29105"/>
    </ligand>
</feature>
<feature type="binding site" evidence="1">
    <location>
        <position position="264"/>
    </location>
    <ligand>
        <name>Zn(2+)</name>
        <dbReference type="ChEBI" id="CHEBI:29105"/>
    </ligand>
</feature>
<organism>
    <name type="scientific">Thiobacillus denitrificans (strain ATCC 25259 / T1)</name>
    <dbReference type="NCBI Taxonomy" id="292415"/>
    <lineage>
        <taxon>Bacteria</taxon>
        <taxon>Pseudomonadati</taxon>
        <taxon>Pseudomonadota</taxon>
        <taxon>Betaproteobacteria</taxon>
        <taxon>Nitrosomonadales</taxon>
        <taxon>Thiobacillaceae</taxon>
        <taxon>Thiobacillus</taxon>
    </lineage>
</organism>
<name>AROB_THIDA</name>
<accession>Q3SLY4</accession>